<keyword id="KW-0496">Mitochondrion</keyword>
<keyword id="KW-0687">Ribonucleoprotein</keyword>
<keyword id="KW-0689">Ribosomal protein</keyword>
<keyword id="KW-0809">Transit peptide</keyword>
<gene>
    <name type="primary">RSM10</name>
    <name type="ordered locus">CNBH1390</name>
</gene>
<evidence type="ECO:0000250" key="1"/>
<evidence type="ECO:0000255" key="2"/>
<evidence type="ECO:0000256" key="3">
    <source>
        <dbReference type="SAM" id="MobiDB-lite"/>
    </source>
</evidence>
<evidence type="ECO:0000305" key="4"/>
<sequence length="255" mass="28084">MALPAARSALSARAFIRPAAALNAAASSSRYLSTTTPRHDAPVATTPGNSETALPVPLPGIKFLSMPPVTPHPPTHGIHVATLHLQAHHPYNLDLVSQFAVHSAHSLNIPTSLPAFLPREKSLYTVLKSPFVKKKAQENFERRTHKRAIKVYDADREAIDLWLRYLRQNALPGVGMKAYIHEWVELGFGRKEAEGQNEIEMEVEEKRIQDAAAELVKALSEGEGEDQAEGVQKIVDAAREEKPAEKLKEEEAKSS</sequence>
<dbReference type="EMBL" id="AAEY01000042">
    <property type="protein sequence ID" value="EAL19037.1"/>
    <property type="molecule type" value="Genomic_DNA"/>
</dbReference>
<dbReference type="RefSeq" id="XP_773684.1">
    <property type="nucleotide sequence ID" value="XM_768591.1"/>
</dbReference>
<dbReference type="SMR" id="P0CQ55"/>
<dbReference type="EnsemblFungi" id="AAW45511">
    <property type="protein sequence ID" value="AAW45511"/>
    <property type="gene ID" value="CNI01480"/>
</dbReference>
<dbReference type="GeneID" id="4937659"/>
<dbReference type="KEGG" id="cnb:CNBH1390"/>
<dbReference type="VEuPathDB" id="FungiDB:CNBH1390"/>
<dbReference type="HOGENOM" id="CLU_051208_5_1_1"/>
<dbReference type="OrthoDB" id="9372at5206"/>
<dbReference type="GO" id="GO:0005739">
    <property type="term" value="C:mitochondrion"/>
    <property type="evidence" value="ECO:0007669"/>
    <property type="project" value="UniProtKB-SubCell"/>
</dbReference>
<dbReference type="GO" id="GO:1990904">
    <property type="term" value="C:ribonucleoprotein complex"/>
    <property type="evidence" value="ECO:0007669"/>
    <property type="project" value="UniProtKB-KW"/>
</dbReference>
<dbReference type="GO" id="GO:0005840">
    <property type="term" value="C:ribosome"/>
    <property type="evidence" value="ECO:0007669"/>
    <property type="project" value="UniProtKB-KW"/>
</dbReference>
<dbReference type="GO" id="GO:0003735">
    <property type="term" value="F:structural constituent of ribosome"/>
    <property type="evidence" value="ECO:0007669"/>
    <property type="project" value="InterPro"/>
</dbReference>
<dbReference type="GO" id="GO:0006412">
    <property type="term" value="P:translation"/>
    <property type="evidence" value="ECO:0007669"/>
    <property type="project" value="InterPro"/>
</dbReference>
<dbReference type="FunFam" id="3.30.70.600:FF:000003">
    <property type="entry name" value="30S ribosomal protein S10"/>
    <property type="match status" value="1"/>
</dbReference>
<dbReference type="Gene3D" id="3.30.70.600">
    <property type="entry name" value="Ribosomal protein S10 domain"/>
    <property type="match status" value="1"/>
</dbReference>
<dbReference type="HAMAP" id="MF_00508">
    <property type="entry name" value="Ribosomal_uS10"/>
    <property type="match status" value="1"/>
</dbReference>
<dbReference type="InterPro" id="IPR001848">
    <property type="entry name" value="Ribosomal_uS10"/>
</dbReference>
<dbReference type="InterPro" id="IPR027486">
    <property type="entry name" value="Ribosomal_uS10_dom"/>
</dbReference>
<dbReference type="InterPro" id="IPR036838">
    <property type="entry name" value="Ribosomal_uS10_dom_sf"/>
</dbReference>
<dbReference type="PANTHER" id="PTHR11700">
    <property type="entry name" value="30S RIBOSOMAL PROTEIN S10 FAMILY MEMBER"/>
    <property type="match status" value="1"/>
</dbReference>
<dbReference type="Pfam" id="PF00338">
    <property type="entry name" value="Ribosomal_S10"/>
    <property type="match status" value="1"/>
</dbReference>
<dbReference type="PRINTS" id="PR00971">
    <property type="entry name" value="RIBOSOMALS10"/>
</dbReference>
<dbReference type="SMART" id="SM01403">
    <property type="entry name" value="Ribosomal_S10"/>
    <property type="match status" value="1"/>
</dbReference>
<dbReference type="SUPFAM" id="SSF54999">
    <property type="entry name" value="Ribosomal protein S10"/>
    <property type="match status" value="1"/>
</dbReference>
<accession>P0CQ55</accession>
<accession>Q55NE8</accession>
<accession>Q5KBT4</accession>
<name>RT10_CRYNB</name>
<feature type="transit peptide" description="Mitochondrion" evidence="2">
    <location>
        <begin position="1"/>
        <end position="32"/>
    </location>
</feature>
<feature type="chain" id="PRO_0000410238" description="Small ribosomal subunit protein uS10m">
    <location>
        <begin position="33"/>
        <end position="255"/>
    </location>
</feature>
<feature type="region of interest" description="Disordered" evidence="3">
    <location>
        <begin position="30"/>
        <end position="52"/>
    </location>
</feature>
<feature type="region of interest" description="Disordered" evidence="3">
    <location>
        <begin position="220"/>
        <end position="255"/>
    </location>
</feature>
<feature type="compositionally biased region" description="Basic and acidic residues" evidence="3">
    <location>
        <begin position="236"/>
        <end position="255"/>
    </location>
</feature>
<organism>
    <name type="scientific">Cryptococcus neoformans var. neoformans serotype D (strain B-3501A)</name>
    <name type="common">Filobasidiella neoformans</name>
    <dbReference type="NCBI Taxonomy" id="283643"/>
    <lineage>
        <taxon>Eukaryota</taxon>
        <taxon>Fungi</taxon>
        <taxon>Dikarya</taxon>
        <taxon>Basidiomycota</taxon>
        <taxon>Agaricomycotina</taxon>
        <taxon>Tremellomycetes</taxon>
        <taxon>Tremellales</taxon>
        <taxon>Cryptococcaceae</taxon>
        <taxon>Cryptococcus</taxon>
        <taxon>Cryptococcus neoformans species complex</taxon>
    </lineage>
</organism>
<proteinExistence type="inferred from homology"/>
<reference key="1">
    <citation type="journal article" date="2005" name="Science">
        <title>The genome of the basidiomycetous yeast and human pathogen Cryptococcus neoformans.</title>
        <authorList>
            <person name="Loftus B.J."/>
            <person name="Fung E."/>
            <person name="Roncaglia P."/>
            <person name="Rowley D."/>
            <person name="Amedeo P."/>
            <person name="Bruno D."/>
            <person name="Vamathevan J."/>
            <person name="Miranda M."/>
            <person name="Anderson I.J."/>
            <person name="Fraser J.A."/>
            <person name="Allen J.E."/>
            <person name="Bosdet I.E."/>
            <person name="Brent M.R."/>
            <person name="Chiu R."/>
            <person name="Doering T.L."/>
            <person name="Donlin M.J."/>
            <person name="D'Souza C.A."/>
            <person name="Fox D.S."/>
            <person name="Grinberg V."/>
            <person name="Fu J."/>
            <person name="Fukushima M."/>
            <person name="Haas B.J."/>
            <person name="Huang J.C."/>
            <person name="Janbon G."/>
            <person name="Jones S.J.M."/>
            <person name="Koo H.L."/>
            <person name="Krzywinski M.I."/>
            <person name="Kwon-Chung K.J."/>
            <person name="Lengeler K.B."/>
            <person name="Maiti R."/>
            <person name="Marra M.A."/>
            <person name="Marra R.E."/>
            <person name="Mathewson C.A."/>
            <person name="Mitchell T.G."/>
            <person name="Pertea M."/>
            <person name="Riggs F.R."/>
            <person name="Salzberg S.L."/>
            <person name="Schein J.E."/>
            <person name="Shvartsbeyn A."/>
            <person name="Shin H."/>
            <person name="Shumway M."/>
            <person name="Specht C.A."/>
            <person name="Suh B.B."/>
            <person name="Tenney A."/>
            <person name="Utterback T.R."/>
            <person name="Wickes B.L."/>
            <person name="Wortman J.R."/>
            <person name="Wye N.H."/>
            <person name="Kronstad J.W."/>
            <person name="Lodge J.K."/>
            <person name="Heitman J."/>
            <person name="Davis R.W."/>
            <person name="Fraser C.M."/>
            <person name="Hyman R.W."/>
        </authorList>
    </citation>
    <scope>NUCLEOTIDE SEQUENCE [LARGE SCALE GENOMIC DNA]</scope>
    <source>
        <strain>B-3501A</strain>
    </source>
</reference>
<protein>
    <recommendedName>
        <fullName evidence="4">Small ribosomal subunit protein uS10m</fullName>
    </recommendedName>
    <alternativeName>
        <fullName>37S ribosomal protein S10, mitochondrial</fullName>
    </alternativeName>
    <alternativeName>
        <fullName>Mitochondrial ribosomal small subunit protein 10</fullName>
    </alternativeName>
</protein>
<comment type="function">
    <text evidence="1">Involved in mitochondrial genome encoded proteins translation. Involved in the binding of tRNA to the ribosomes (By similarity).</text>
</comment>
<comment type="subunit">
    <text evidence="1">Part of the mitochondrial small ribosomal subunit.</text>
</comment>
<comment type="subcellular location">
    <subcellularLocation>
        <location evidence="1">Mitochondrion</location>
    </subcellularLocation>
</comment>
<comment type="similarity">
    <text evidence="4">Belongs to the universal ribosomal protein uS10 family.</text>
</comment>